<protein>
    <recommendedName>
        <fullName>Chondroitin sulfate proteoglycan 5</fullName>
    </recommendedName>
    <alternativeName>
        <fullName>Acidic leucine-rich EGF-like domain-containing brain protein</fullName>
    </alternativeName>
    <alternativeName>
        <fullName>Neuroglycan C</fullName>
    </alternativeName>
</protein>
<gene>
    <name type="primary">CSPG5</name>
    <name type="synonym">CALEB</name>
    <name type="synonym">NGC</name>
</gene>
<sequence length="566" mass="60016">MGRAGGGGPGRGPPPLLLFLGAALVLASGAVPAREAGSAVEAEELVKGSPAWEPPANDTREEAGPPAAGEDEASWTAPGGELAGPEEVLQESAAVTGTAWLEADSPGLGGVTAEAGSGDAQALPATLQAPHEVLGQSIMPPAIPEATEASGPPSPTPGDKLSPASELPKESPLEVWLNLGGSTPDPQGPELTYPFQGTLEPQPASDIIDIDYFEGLDGEGRGADLGSFPGSPGTSENHPDTEGETPSWSLLDLYDDFTPFDESDFYPTTSFYDDLDEEEEEEEDDKDAVGGGDLEDENELLVPTGKPGLGPGTGQPTSRWHAVPPQHTLGSVPGSSIALRPRPGEPGRDLASSENGTECRSGFVRHNGSCRSVCDLFPSYCHNGGQCYLVENIGAFCRCNTQDYIWHKGMRCESIITDFQVMCVAVGSAALVLLLLFMMTVFFAKKLYLLKTENTKLRRTNKFRTPSELHNDNFSLSTIAEGSHPNVRKLCNTPRTSSPHARALAHYDNVICQDDPSAPHKIQEVLKSCLKEEESFNIQNSMSPKLEGGKGDQADLDVNCLQNNLT</sequence>
<proteinExistence type="evidence at protein level"/>
<reference key="1">
    <citation type="journal article" date="1998" name="Neurosci. Res.">
        <title>Cloning and chromosomal mapping of the human gene of neuroglycan C (NGC), a neural transmembrane chondroitin sulfate proteoglycan with an EGF module.</title>
        <authorList>
            <person name="Yasuda Y."/>
            <person name="Tokita Y."/>
            <person name="Aono S."/>
            <person name="Matsui F."/>
            <person name="Ono T."/>
            <person name="Sonta S."/>
            <person name="Watanabe E."/>
            <person name="Nakanishi Y."/>
            <person name="Oohira A."/>
        </authorList>
    </citation>
    <scope>NUCLEOTIDE SEQUENCE [MRNA] (ISOFORM 2)</scope>
    <scope>TISSUE SPECIFICITY</scope>
    <scope>DEVELOPMENTAL STAGE</scope>
    <scope>VARIANT VAL-188</scope>
    <source>
        <tissue>Brain</tissue>
    </source>
</reference>
<reference key="2">
    <citation type="submission" date="2001-12" db="EMBL/GenBank/DDBJ databases">
        <title>Expression of neuroglycan C (NGC), a transmembrane chondroitin sulfate proteoglycan with an EGF module, in the human brain.</title>
        <authorList>
            <person name="Aono S."/>
            <person name="Tokita Y."/>
            <person name="Yamauchi S."/>
            <person name="Shuo T."/>
            <person name="Matsui F."/>
            <person name="Yasuda Y."/>
            <person name="Keino H."/>
            <person name="Shimada A."/>
            <person name="Kishikawa M."/>
            <person name="Asai M."/>
            <person name="Oohira A."/>
        </authorList>
    </citation>
    <scope>NUCLEOTIDE SEQUENCE [MRNA] (ISOFORMS 1; 2 AND 3)</scope>
    <scope>VARIANT VAL-188</scope>
</reference>
<reference key="3">
    <citation type="journal article" date="2006" name="Nature">
        <title>The DNA sequence, annotation and analysis of human chromosome 3.</title>
        <authorList>
            <person name="Muzny D.M."/>
            <person name="Scherer S.E."/>
            <person name="Kaul R."/>
            <person name="Wang J."/>
            <person name="Yu J."/>
            <person name="Sudbrak R."/>
            <person name="Buhay C.J."/>
            <person name="Chen R."/>
            <person name="Cree A."/>
            <person name="Ding Y."/>
            <person name="Dugan-Rocha S."/>
            <person name="Gill R."/>
            <person name="Gunaratne P."/>
            <person name="Harris R.A."/>
            <person name="Hawes A.C."/>
            <person name="Hernandez J."/>
            <person name="Hodgson A.V."/>
            <person name="Hume J."/>
            <person name="Jackson A."/>
            <person name="Khan Z.M."/>
            <person name="Kovar-Smith C."/>
            <person name="Lewis L.R."/>
            <person name="Lozado R.J."/>
            <person name="Metzker M.L."/>
            <person name="Milosavljevic A."/>
            <person name="Miner G.R."/>
            <person name="Morgan M.B."/>
            <person name="Nazareth L.V."/>
            <person name="Scott G."/>
            <person name="Sodergren E."/>
            <person name="Song X.-Z."/>
            <person name="Steffen D."/>
            <person name="Wei S."/>
            <person name="Wheeler D.A."/>
            <person name="Wright M.W."/>
            <person name="Worley K.C."/>
            <person name="Yuan Y."/>
            <person name="Zhang Z."/>
            <person name="Adams C.Q."/>
            <person name="Ansari-Lari M.A."/>
            <person name="Ayele M."/>
            <person name="Brown M.J."/>
            <person name="Chen G."/>
            <person name="Chen Z."/>
            <person name="Clendenning J."/>
            <person name="Clerc-Blankenburg K.P."/>
            <person name="Chen R."/>
            <person name="Chen Z."/>
            <person name="Davis C."/>
            <person name="Delgado O."/>
            <person name="Dinh H.H."/>
            <person name="Dong W."/>
            <person name="Draper H."/>
            <person name="Ernst S."/>
            <person name="Fu G."/>
            <person name="Gonzalez-Garay M.L."/>
            <person name="Garcia D.K."/>
            <person name="Gillett W."/>
            <person name="Gu J."/>
            <person name="Hao B."/>
            <person name="Haugen E."/>
            <person name="Havlak P."/>
            <person name="He X."/>
            <person name="Hennig S."/>
            <person name="Hu S."/>
            <person name="Huang W."/>
            <person name="Jackson L.R."/>
            <person name="Jacob L.S."/>
            <person name="Kelly S.H."/>
            <person name="Kube M."/>
            <person name="Levy R."/>
            <person name="Li Z."/>
            <person name="Liu B."/>
            <person name="Liu J."/>
            <person name="Liu W."/>
            <person name="Lu J."/>
            <person name="Maheshwari M."/>
            <person name="Nguyen B.-V."/>
            <person name="Okwuonu G.O."/>
            <person name="Palmeiri A."/>
            <person name="Pasternak S."/>
            <person name="Perez L.M."/>
            <person name="Phelps K.A."/>
            <person name="Plopper F.J."/>
            <person name="Qiang B."/>
            <person name="Raymond C."/>
            <person name="Rodriguez R."/>
            <person name="Saenphimmachak C."/>
            <person name="Santibanez J."/>
            <person name="Shen H."/>
            <person name="Shen Y."/>
            <person name="Subramanian S."/>
            <person name="Tabor P.E."/>
            <person name="Verduzco D."/>
            <person name="Waldron L."/>
            <person name="Wang J."/>
            <person name="Wang J."/>
            <person name="Wang Q."/>
            <person name="Williams G.A."/>
            <person name="Wong G.K.-S."/>
            <person name="Yao Z."/>
            <person name="Zhang J."/>
            <person name="Zhang X."/>
            <person name="Zhao G."/>
            <person name="Zhou J."/>
            <person name="Zhou Y."/>
            <person name="Nelson D."/>
            <person name="Lehrach H."/>
            <person name="Reinhardt R."/>
            <person name="Naylor S.L."/>
            <person name="Yang H."/>
            <person name="Olson M."/>
            <person name="Weinstock G."/>
            <person name="Gibbs R.A."/>
        </authorList>
    </citation>
    <scope>NUCLEOTIDE SEQUENCE [LARGE SCALE GENOMIC DNA]</scope>
</reference>
<reference key="4">
    <citation type="journal article" date="2003" name="J. Biol. Chem.">
        <title>CALEB/NGC interacts with the Golgi-associated protein PIST.</title>
        <authorList>
            <person name="Hassel B."/>
            <person name="Schreff M."/>
            <person name="Stuebe E.-M."/>
            <person name="Blaich U."/>
            <person name="Schumacher S."/>
        </authorList>
    </citation>
    <scope>INTERACTION WITH GOPC</scope>
</reference>
<reference key="5">
    <citation type="journal article" date="2004" name="Biochem. Biophys. Res. Commun.">
        <title>Neuroglycan C, a novel member of the neuregulin family.</title>
        <authorList>
            <person name="Kinugasa Y."/>
            <person name="Ishiguro H."/>
            <person name="Tokita Y."/>
            <person name="Oohira A."/>
            <person name="Ohmoto H."/>
            <person name="Higashiyama S."/>
        </authorList>
    </citation>
    <scope>INTERACTION WITH ERBB3</scope>
    <scope>FUNCTION</scope>
</reference>
<reference key="6">
    <citation type="journal article" date="2013" name="J. Proteome Res.">
        <title>LC-MS/MS characterization of O-glycosylation sites and glycan structures of human cerebrospinal fluid glycoproteins.</title>
        <authorList>
            <person name="Halim A."/>
            <person name="Ruetschi U."/>
            <person name="Larson G."/>
            <person name="Nilsson J."/>
        </authorList>
    </citation>
    <scope>GLYCOSYLATION AT SER-165</scope>
    <scope>IDENTIFICATION BY MASS SPECTROMETRY</scope>
</reference>
<reference key="7">
    <citation type="journal article" date="2015" name="Mol. Cell. Proteomics">
        <title>Identification of chondroitin sulfate linkage region glycopeptides reveals prohormones as a novel class of proteoglycans.</title>
        <authorList>
            <person name="Noborn F."/>
            <person name="Gomez Toledo A."/>
            <person name="Sihlbom C."/>
            <person name="Lengqvist J."/>
            <person name="Fries E."/>
            <person name="Kjellen L."/>
            <person name="Nilsson J."/>
            <person name="Larson G."/>
        </authorList>
    </citation>
    <scope>SUBCELLULAR LOCATION</scope>
    <scope>TISSUE SPECIFICITY</scope>
    <scope>GLYCOSYLATION AT SER-38</scope>
</reference>
<reference key="8">
    <citation type="journal article" date="2023" name="Mol. Cell. Proteomics">
        <title>Mapping the Human Chondroitin Sulfate Glycoproteome Reveals an Unexpected Correlation Between Glycan Sulfation and Attachment Site Characteristics.</title>
        <authorList>
            <person name="Noborn F."/>
            <person name="Nilsson J."/>
            <person name="Sihlbom C."/>
            <person name="Nikpour M."/>
            <person name="Kjellen L."/>
            <person name="Larson G."/>
        </authorList>
    </citation>
    <scope>SUBCELLULAR LOCATION</scope>
    <scope>TISSUE SPECIFICITY</scope>
    <scope>GLYCOSYLATION AT SER-38</scope>
</reference>
<dbReference type="EMBL" id="AF059274">
    <property type="protein sequence ID" value="AAC69612.1"/>
    <property type="molecule type" value="mRNA"/>
</dbReference>
<dbReference type="EMBL" id="AF461087">
    <property type="protein sequence ID" value="AAQ04774.1"/>
    <property type="molecule type" value="mRNA"/>
</dbReference>
<dbReference type="EMBL" id="AF461088">
    <property type="protein sequence ID" value="AAQ04775.1"/>
    <property type="molecule type" value="mRNA"/>
</dbReference>
<dbReference type="EMBL" id="AF461089">
    <property type="protein sequence ID" value="AAQ04776.1"/>
    <property type="molecule type" value="mRNA"/>
</dbReference>
<dbReference type="EMBL" id="AC099778">
    <property type="status" value="NOT_ANNOTATED_CDS"/>
    <property type="molecule type" value="Genomic_DNA"/>
</dbReference>
<dbReference type="EMBL" id="AC112512">
    <property type="status" value="NOT_ANNOTATED_CDS"/>
    <property type="molecule type" value="Genomic_DNA"/>
</dbReference>
<dbReference type="CCDS" id="CCDS2757.1">
    <molecule id="O95196-2"/>
</dbReference>
<dbReference type="CCDS" id="CCDS56252.1">
    <molecule id="O95196-3"/>
</dbReference>
<dbReference type="CCDS" id="CCDS56253.1">
    <molecule id="O95196-1"/>
</dbReference>
<dbReference type="RefSeq" id="NP_001193871.1">
    <molecule id="O95196-3"/>
    <property type="nucleotide sequence ID" value="NM_001206942.2"/>
</dbReference>
<dbReference type="RefSeq" id="NP_001193872.1">
    <molecule id="O95196-1"/>
    <property type="nucleotide sequence ID" value="NM_001206943.2"/>
</dbReference>
<dbReference type="RefSeq" id="NP_001193873.1">
    <property type="nucleotide sequence ID" value="NM_001206944.1"/>
</dbReference>
<dbReference type="RefSeq" id="NP_006565.2">
    <molecule id="O95196-2"/>
    <property type="nucleotide sequence ID" value="NM_006574.4"/>
</dbReference>
<dbReference type="RefSeq" id="XP_047303288.1">
    <molecule id="O95196-3"/>
    <property type="nucleotide sequence ID" value="XM_047447332.1"/>
</dbReference>
<dbReference type="RefSeq" id="XP_054200964.1">
    <molecule id="O95196-3"/>
    <property type="nucleotide sequence ID" value="XM_054344989.1"/>
</dbReference>
<dbReference type="BioGRID" id="115917">
    <property type="interactions" value="49"/>
</dbReference>
<dbReference type="FunCoup" id="O95196">
    <property type="interactions" value="328"/>
</dbReference>
<dbReference type="IntAct" id="O95196">
    <property type="interactions" value="33"/>
</dbReference>
<dbReference type="MINT" id="O95196"/>
<dbReference type="STRING" id="9606.ENSP00000373244"/>
<dbReference type="GlyConnect" id="657">
    <property type="glycosylation" value="1 O-Linked glycan (1 site)"/>
</dbReference>
<dbReference type="GlyCosmos" id="O95196">
    <property type="glycosylation" value="3 sites, 2 glycans"/>
</dbReference>
<dbReference type="GlyGen" id="O95196">
    <property type="glycosylation" value="9 sites, 1 N-linked glycan (1 site), 4 O-linked glycans (4 sites)"/>
</dbReference>
<dbReference type="iPTMnet" id="O95196"/>
<dbReference type="PhosphoSitePlus" id="O95196"/>
<dbReference type="BioMuta" id="CSPG5"/>
<dbReference type="jPOST" id="O95196"/>
<dbReference type="MassIVE" id="O95196"/>
<dbReference type="PaxDb" id="9606-ENSP00000373244"/>
<dbReference type="PeptideAtlas" id="O95196"/>
<dbReference type="ProteomicsDB" id="50697">
    <molecule id="O95196-1"/>
</dbReference>
<dbReference type="ProteomicsDB" id="50698">
    <molecule id="O95196-2"/>
</dbReference>
<dbReference type="ProteomicsDB" id="50699">
    <molecule id="O95196-3"/>
</dbReference>
<dbReference type="Antibodypedia" id="29949">
    <property type="antibodies" value="259 antibodies from 31 providers"/>
</dbReference>
<dbReference type="DNASU" id="10675"/>
<dbReference type="Ensembl" id="ENST00000264723.9">
    <molecule id="O95196-2"/>
    <property type="protein sequence ID" value="ENSP00000264723.4"/>
    <property type="gene ID" value="ENSG00000114646.10"/>
</dbReference>
<dbReference type="Ensembl" id="ENST00000383738.6">
    <molecule id="O95196-1"/>
    <property type="protein sequence ID" value="ENSP00000373244.2"/>
    <property type="gene ID" value="ENSG00000114646.10"/>
</dbReference>
<dbReference type="Ensembl" id="ENST00000456150.5">
    <molecule id="O95196-3"/>
    <property type="protein sequence ID" value="ENSP00000392096.1"/>
    <property type="gene ID" value="ENSG00000114646.10"/>
</dbReference>
<dbReference type="GeneID" id="10675"/>
<dbReference type="KEGG" id="hsa:10675"/>
<dbReference type="MANE-Select" id="ENST00000264723.9">
    <molecule id="O95196-2"/>
    <property type="protein sequence ID" value="ENSP00000264723.4"/>
    <property type="RefSeq nucleotide sequence ID" value="NM_006574.4"/>
    <property type="RefSeq protein sequence ID" value="NP_006565.2"/>
</dbReference>
<dbReference type="UCSC" id="uc003crn.4">
    <molecule id="O95196-1"/>
    <property type="organism name" value="human"/>
</dbReference>
<dbReference type="AGR" id="HGNC:2467"/>
<dbReference type="CTD" id="10675"/>
<dbReference type="DisGeNET" id="10675"/>
<dbReference type="GeneCards" id="CSPG5"/>
<dbReference type="HGNC" id="HGNC:2467">
    <property type="gene designation" value="CSPG5"/>
</dbReference>
<dbReference type="HPA" id="ENSG00000114646">
    <property type="expression patterns" value="Group enriched (brain, choroid plexus, retina)"/>
</dbReference>
<dbReference type="MIM" id="606775">
    <property type="type" value="gene"/>
</dbReference>
<dbReference type="neXtProt" id="NX_O95196"/>
<dbReference type="OpenTargets" id="ENSG00000114646"/>
<dbReference type="PharmGKB" id="PA26965"/>
<dbReference type="VEuPathDB" id="HostDB:ENSG00000114646"/>
<dbReference type="eggNOG" id="ENOG502QXSB">
    <property type="taxonomic scope" value="Eukaryota"/>
</dbReference>
<dbReference type="GeneTree" id="ENSGT00440000034270"/>
<dbReference type="HOGENOM" id="CLU_034739_0_0_1"/>
<dbReference type="InParanoid" id="O95196"/>
<dbReference type="OMA" id="WEPHAND"/>
<dbReference type="OrthoDB" id="9935774at2759"/>
<dbReference type="PAN-GO" id="O95196">
    <property type="GO annotations" value="3 GO annotations based on evolutionary models"/>
</dbReference>
<dbReference type="PhylomeDB" id="O95196"/>
<dbReference type="TreeFam" id="TF338636"/>
<dbReference type="PathwayCommons" id="O95196"/>
<dbReference type="Reactome" id="R-HSA-1971475">
    <property type="pathway name" value="A tetrasaccharide linker sequence is required for GAG synthesis"/>
</dbReference>
<dbReference type="Reactome" id="R-HSA-2022870">
    <property type="pathway name" value="Chondroitin sulfate biosynthesis"/>
</dbReference>
<dbReference type="Reactome" id="R-HSA-2022923">
    <property type="pathway name" value="Dermatan sulfate biosynthesis"/>
</dbReference>
<dbReference type="Reactome" id="R-HSA-2024101">
    <property type="pathway name" value="CS/DS degradation"/>
</dbReference>
<dbReference type="Reactome" id="R-HSA-3560783">
    <property type="pathway name" value="Defective B4GALT7 causes EDS, progeroid type"/>
</dbReference>
<dbReference type="Reactome" id="R-HSA-3560801">
    <property type="pathway name" value="Defective B3GAT3 causes JDSSDHD"/>
</dbReference>
<dbReference type="Reactome" id="R-HSA-3595172">
    <property type="pathway name" value="Defective CHST3 causes SEDCJD"/>
</dbReference>
<dbReference type="Reactome" id="R-HSA-3595174">
    <property type="pathway name" value="Defective CHST14 causes EDS, musculocontractural type"/>
</dbReference>
<dbReference type="Reactome" id="R-HSA-3595177">
    <property type="pathway name" value="Defective CHSY1 causes TPBS"/>
</dbReference>
<dbReference type="Reactome" id="R-HSA-4420332">
    <property type="pathway name" value="Defective B3GALT6 causes EDSP2 and SEMDJL1"/>
</dbReference>
<dbReference type="SignaLink" id="O95196"/>
<dbReference type="BioGRID-ORCS" id="10675">
    <property type="hits" value="15 hits in 1151 CRISPR screens"/>
</dbReference>
<dbReference type="ChiTaRS" id="CSPG5">
    <property type="organism name" value="human"/>
</dbReference>
<dbReference type="GenomeRNAi" id="10675"/>
<dbReference type="Pharos" id="O95196">
    <property type="development level" value="Tbio"/>
</dbReference>
<dbReference type="PRO" id="PR:O95196"/>
<dbReference type="Proteomes" id="UP000005640">
    <property type="component" value="Chromosome 3"/>
</dbReference>
<dbReference type="RNAct" id="O95196">
    <property type="molecule type" value="protein"/>
</dbReference>
<dbReference type="Bgee" id="ENSG00000114646">
    <property type="expression patterns" value="Expressed in endothelial cell and 149 other cell types or tissues"/>
</dbReference>
<dbReference type="ExpressionAtlas" id="O95196">
    <property type="expression patterns" value="baseline and differential"/>
</dbReference>
<dbReference type="GO" id="GO:0009986">
    <property type="term" value="C:cell surface"/>
    <property type="evidence" value="ECO:0007669"/>
    <property type="project" value="UniProtKB-SubCell"/>
</dbReference>
<dbReference type="GO" id="GO:0005789">
    <property type="term" value="C:endoplasmic reticulum membrane"/>
    <property type="evidence" value="ECO:0007669"/>
    <property type="project" value="UniProtKB-SubCell"/>
</dbReference>
<dbReference type="GO" id="GO:0005576">
    <property type="term" value="C:extracellular region"/>
    <property type="evidence" value="ECO:0000304"/>
    <property type="project" value="Reactome"/>
</dbReference>
<dbReference type="GO" id="GO:0098982">
    <property type="term" value="C:GABA-ergic synapse"/>
    <property type="evidence" value="ECO:0007669"/>
    <property type="project" value="Ensembl"/>
</dbReference>
<dbReference type="GO" id="GO:0098978">
    <property type="term" value="C:glutamatergic synapse"/>
    <property type="evidence" value="ECO:0007669"/>
    <property type="project" value="Ensembl"/>
</dbReference>
<dbReference type="GO" id="GO:0005794">
    <property type="term" value="C:Golgi apparatus"/>
    <property type="evidence" value="ECO:0000314"/>
    <property type="project" value="UniProtKB"/>
</dbReference>
<dbReference type="GO" id="GO:0005796">
    <property type="term" value="C:Golgi lumen"/>
    <property type="evidence" value="ECO:0000304"/>
    <property type="project" value="Reactome"/>
</dbReference>
<dbReference type="GO" id="GO:0000139">
    <property type="term" value="C:Golgi membrane"/>
    <property type="evidence" value="ECO:0007669"/>
    <property type="project" value="UniProtKB-SubCell"/>
</dbReference>
<dbReference type="GO" id="GO:0030660">
    <property type="term" value="C:Golgi-associated vesicle membrane"/>
    <property type="evidence" value="ECO:0000314"/>
    <property type="project" value="UniProtKB"/>
</dbReference>
<dbReference type="GO" id="GO:0043202">
    <property type="term" value="C:lysosomal lumen"/>
    <property type="evidence" value="ECO:0000304"/>
    <property type="project" value="Reactome"/>
</dbReference>
<dbReference type="GO" id="GO:0016020">
    <property type="term" value="C:membrane"/>
    <property type="evidence" value="ECO:0000304"/>
    <property type="project" value="UniProtKB"/>
</dbReference>
<dbReference type="GO" id="GO:0005886">
    <property type="term" value="C:plasma membrane"/>
    <property type="evidence" value="ECO:0000304"/>
    <property type="project" value="ProtInc"/>
</dbReference>
<dbReference type="GO" id="GO:0045211">
    <property type="term" value="C:postsynaptic membrane"/>
    <property type="evidence" value="ECO:0007669"/>
    <property type="project" value="Ensembl"/>
</dbReference>
<dbReference type="GO" id="GO:0045202">
    <property type="term" value="C:synapse"/>
    <property type="evidence" value="ECO:0000318"/>
    <property type="project" value="GO_Central"/>
</dbReference>
<dbReference type="GO" id="GO:0008083">
    <property type="term" value="F:growth factor activity"/>
    <property type="evidence" value="ECO:0000304"/>
    <property type="project" value="UniProtKB"/>
</dbReference>
<dbReference type="GO" id="GO:0048858">
    <property type="term" value="P:cell projection morphogenesis"/>
    <property type="evidence" value="ECO:0000318"/>
    <property type="project" value="GO_Central"/>
</dbReference>
<dbReference type="GO" id="GO:0007010">
    <property type="term" value="P:cytoskeleton organization"/>
    <property type="evidence" value="ECO:0000250"/>
    <property type="project" value="UniProtKB"/>
</dbReference>
<dbReference type="GO" id="GO:0106091">
    <property type="term" value="P:glial cell projection elongation"/>
    <property type="evidence" value="ECO:0000250"/>
    <property type="project" value="UniProtKB"/>
</dbReference>
<dbReference type="GO" id="GO:0046907">
    <property type="term" value="P:intracellular transport"/>
    <property type="evidence" value="ECO:0000304"/>
    <property type="project" value="UniProtKB"/>
</dbReference>
<dbReference type="GO" id="GO:0007399">
    <property type="term" value="P:nervous system development"/>
    <property type="evidence" value="ECO:0000304"/>
    <property type="project" value="UniProtKB"/>
</dbReference>
<dbReference type="GO" id="GO:1900026">
    <property type="term" value="P:positive regulation of substrate adhesion-dependent cell spreading"/>
    <property type="evidence" value="ECO:0000250"/>
    <property type="project" value="UniProtKB"/>
</dbReference>
<dbReference type="GO" id="GO:2000300">
    <property type="term" value="P:regulation of synaptic vesicle exocytosis"/>
    <property type="evidence" value="ECO:0007669"/>
    <property type="project" value="Ensembl"/>
</dbReference>
<dbReference type="InterPro" id="IPR010555">
    <property type="entry name" value="CSPG5_S_attach_dom"/>
</dbReference>
<dbReference type="InterPro" id="IPR009505">
    <property type="entry name" value="Neural_ProG_Cyt"/>
</dbReference>
<dbReference type="PANTHER" id="PTHR15381:SF1">
    <property type="entry name" value="CHONDROITIN SULFATE PROTEOGLYCAN 5"/>
    <property type="match status" value="1"/>
</dbReference>
<dbReference type="PANTHER" id="PTHR15381">
    <property type="entry name" value="CHONDROITIN SULFATE PROTEOGLYCAN 5 -RELATED"/>
    <property type="match status" value="1"/>
</dbReference>
<dbReference type="Pfam" id="PF06566">
    <property type="entry name" value="Chon_Sulph_att"/>
    <property type="match status" value="1"/>
</dbReference>
<dbReference type="Pfam" id="PF06567">
    <property type="entry name" value="Neural_ProG_Cyt"/>
    <property type="match status" value="1"/>
</dbReference>
<accession>O95196</accession>
<accession>Q71M39</accession>
<accession>Q71M40</accession>
<organism>
    <name type="scientific">Homo sapiens</name>
    <name type="common">Human</name>
    <dbReference type="NCBI Taxonomy" id="9606"/>
    <lineage>
        <taxon>Eukaryota</taxon>
        <taxon>Metazoa</taxon>
        <taxon>Chordata</taxon>
        <taxon>Craniata</taxon>
        <taxon>Vertebrata</taxon>
        <taxon>Euteleostomi</taxon>
        <taxon>Mammalia</taxon>
        <taxon>Eutheria</taxon>
        <taxon>Euarchontoglires</taxon>
        <taxon>Primates</taxon>
        <taxon>Haplorrhini</taxon>
        <taxon>Catarrhini</taxon>
        <taxon>Hominidae</taxon>
        <taxon>Homo</taxon>
    </lineage>
</organism>
<evidence type="ECO:0000250" key="1"/>
<evidence type="ECO:0000250" key="2">
    <source>
        <dbReference type="UniProtKB" id="Q71M36"/>
    </source>
</evidence>
<evidence type="ECO:0000250" key="3">
    <source>
        <dbReference type="UniProtKB" id="Q9ERQ6"/>
    </source>
</evidence>
<evidence type="ECO:0000255" key="4"/>
<evidence type="ECO:0000256" key="5">
    <source>
        <dbReference type="SAM" id="MobiDB-lite"/>
    </source>
</evidence>
<evidence type="ECO:0000269" key="6">
    <source>
    </source>
</evidence>
<evidence type="ECO:0000269" key="7">
    <source>
    </source>
</evidence>
<evidence type="ECO:0000269" key="8">
    <source>
    </source>
</evidence>
<evidence type="ECO:0000269" key="9">
    <source>
    </source>
</evidence>
<evidence type="ECO:0000269" key="10">
    <source>
    </source>
</evidence>
<evidence type="ECO:0000269" key="11">
    <source>
    </source>
</evidence>
<evidence type="ECO:0000269" key="12">
    <source ref="2"/>
</evidence>
<evidence type="ECO:0000303" key="13">
    <source>
    </source>
</evidence>
<evidence type="ECO:0000303" key="14">
    <source ref="2"/>
</evidence>
<name>CSPG5_HUMAN</name>
<feature type="signal peptide" evidence="4">
    <location>
        <begin position="1"/>
        <end position="30"/>
    </location>
</feature>
<feature type="chain" id="PRO_0000042151" description="Chondroitin sulfate proteoglycan 5">
    <location>
        <begin position="31"/>
        <end position="566"/>
    </location>
</feature>
<feature type="topological domain" description="Extracellular" evidence="4">
    <location>
        <begin position="31"/>
        <end position="423"/>
    </location>
</feature>
<feature type="transmembrane region" description="Helical" evidence="4">
    <location>
        <begin position="424"/>
        <end position="444"/>
    </location>
</feature>
<feature type="topological domain" description="Cytoplasmic" evidence="4">
    <location>
        <begin position="445"/>
        <end position="566"/>
    </location>
</feature>
<feature type="domain" description="EGF-like">
    <location>
        <begin position="371"/>
        <end position="413"/>
    </location>
</feature>
<feature type="region of interest" description="Disordered" evidence="5">
    <location>
        <begin position="39"/>
        <end position="82"/>
    </location>
</feature>
<feature type="region of interest" description="Disordered" evidence="5">
    <location>
        <begin position="143"/>
        <end position="202"/>
    </location>
</feature>
<feature type="region of interest" description="Disordered" evidence="5">
    <location>
        <begin position="215"/>
        <end position="248"/>
    </location>
</feature>
<feature type="region of interest" description="Disordered" evidence="5">
    <location>
        <begin position="262"/>
        <end position="354"/>
    </location>
</feature>
<feature type="region of interest" description="Interaction with TNC and TNR" evidence="1">
    <location>
        <begin position="264"/>
        <end position="301"/>
    </location>
</feature>
<feature type="region of interest" description="Interaction with GOPC" evidence="6">
    <location>
        <begin position="442"/>
        <end position="460"/>
    </location>
</feature>
<feature type="compositionally biased region" description="Acidic residues" evidence="5">
    <location>
        <begin position="273"/>
        <end position="286"/>
    </location>
</feature>
<feature type="modified residue" description="Phosphoserine" evidence="2">
    <location>
        <position position="467"/>
    </location>
</feature>
<feature type="modified residue" description="Phosphoserine" evidence="2">
    <location>
        <position position="475"/>
    </location>
</feature>
<feature type="modified residue" description="Phosphoserine" evidence="2">
    <location>
        <position position="483"/>
    </location>
</feature>
<feature type="modified residue" description="Phosphoserine" evidence="2">
    <location>
        <position position="543"/>
    </location>
</feature>
<feature type="glycosylation site" description="O-linked (Xyl...) (chondroitin sulfate) serine" evidence="9 10">
    <location>
        <position position="38"/>
    </location>
</feature>
<feature type="glycosylation site" description="N-linked (GlcNAc...) asparagine" evidence="4">
    <location>
        <position position="57"/>
    </location>
</feature>
<feature type="glycosylation site" description="O-linked (Xyl...) (chondroitin sulfate) serine" evidence="1">
    <location>
        <position position="117"/>
    </location>
</feature>
<feature type="glycosylation site" description="O-linked (GalNAc...) serine" evidence="8">
    <location>
        <position position="165"/>
    </location>
</feature>
<feature type="disulfide bond" evidence="1">
    <location>
        <begin position="374"/>
        <end position="387"/>
    </location>
</feature>
<feature type="disulfide bond" evidence="1">
    <location>
        <begin position="381"/>
        <end position="397"/>
    </location>
</feature>
<feature type="disulfide bond" evidence="1">
    <location>
        <begin position="399"/>
        <end position="412"/>
    </location>
</feature>
<feature type="splice variant" id="VSP_015760" description="In isoform 3." evidence="14">
    <location>
        <begin position="1"/>
        <end position="138"/>
    </location>
</feature>
<feature type="splice variant" id="VSP_015761" description="In isoform 2 and isoform 3." evidence="13 14">
    <location>
        <begin position="487"/>
        <end position="513"/>
    </location>
</feature>
<feature type="sequence variant" id="VAR_055089" description="In dbSNP:rs3732530." evidence="11 12">
    <original>G</original>
    <variation>V</variation>
    <location>
        <position position="188"/>
    </location>
</feature>
<feature type="sequence variant" id="VAR_055090" description="In dbSNP:rs34016925.">
    <original>T</original>
    <variation>P</variation>
    <location>
        <position position="417"/>
    </location>
</feature>
<comment type="function">
    <text evidence="7">May function as a growth and differentiation factor involved in neuritogenesis. May induce ERBB3 activation.</text>
</comment>
<comment type="subunit">
    <text evidence="1 3 6 7">Binds TNR and probably TNC (By similarity). Interacts with ERBB3 and GOPC. Interacts with MDK; this interaction is independent of the presence of chondroitin sulfate chains and promotes elongation of oligodendroglial precursor-like cells (By similarity).</text>
</comment>
<comment type="interaction">
    <interactant intactId="EBI-296349">
        <id>O95196</id>
    </interactant>
    <interactant intactId="EBI-296357">
        <id>Q8BH60</id>
        <label>Gopc</label>
    </interactant>
    <organismsDiffer>true</organismsDiffer>
    <experiments>3</experiments>
</comment>
<comment type="interaction">
    <interactant intactId="EBI-18400097">
        <id>O95196-2</id>
    </interactant>
    <interactant intactId="EBI-2515857">
        <id>O43681</id>
        <label>GET3</label>
    </interactant>
    <organismsDiffer>false</organismsDiffer>
    <experiments>3</experiments>
</comment>
<comment type="interaction">
    <interactant intactId="EBI-18400097">
        <id>O95196-2</id>
    </interactant>
    <interactant intactId="EBI-14210385">
        <id>Q59EV6</id>
        <label>PPGB</label>
    </interactant>
    <organismsDiffer>false</organismsDiffer>
    <experiments>3</experiments>
</comment>
<comment type="subcellular location">
    <subcellularLocation>
        <location evidence="3">Cell membrane</location>
        <topology evidence="3">Single-pass type I membrane protein</topology>
    </subcellularLocation>
    <subcellularLocation>
        <location evidence="2">Synaptic cell membrane</location>
        <topology evidence="2">Single-pass type I membrane protein</topology>
    </subcellularLocation>
    <subcellularLocation>
        <location evidence="2">Endoplasmic reticulum membrane</location>
        <topology evidence="2">Single-pass type I membrane protein</topology>
    </subcellularLocation>
    <subcellularLocation>
        <location evidence="2">Golgi apparatus membrane</location>
        <topology evidence="2">Single-pass type I membrane protein</topology>
    </subcellularLocation>
    <subcellularLocation>
        <location evidence="2">Cell surface</location>
    </subcellularLocation>
    <subcellularLocation>
        <location evidence="9 10">Secreted</location>
    </subcellularLocation>
    <text evidence="2 3">In neurons, localizes to synaptic junctions. Also detected in the endoplasmic reticulum and the Golgi. Partially enriched in lipid rafts.</text>
</comment>
<comment type="alternative products">
    <event type="alternative splicing"/>
    <isoform>
        <id>O95196-1</id>
        <name>1</name>
        <sequence type="displayed"/>
    </isoform>
    <isoform>
        <id>O95196-2</id>
        <name>2</name>
        <name>CSPG5-I</name>
        <sequence type="described" ref="VSP_015761"/>
    </isoform>
    <isoform>
        <id>O95196-3</id>
        <name>3</name>
        <name>CSPG5-II</name>
        <sequence type="described" ref="VSP_015760 VSP_015761"/>
    </isoform>
</comment>
<comment type="tissue specificity">
    <text evidence="9 10 11">Detected in cerebrospinal fluid (at protein level) (PubMed:25326458). Detected in urine (at protein level) (PubMed:37453717). Expressed in brain (at protein level) (PubMed:9950058).</text>
</comment>
<comment type="developmental stage">
    <text evidence="11">Expressed in brain of 3 months, 5 and 10-year-old individuals.</text>
</comment>
<comment type="PTM">
    <text evidence="1">N-glycosylated.</text>
</comment>
<comment type="PTM">
    <text evidence="2 9">O-glycosylated; contains chondroitin sulfate glycans (PubMed:25326458). Part-time proteoglycan, expressed in part as a proteoglycan exhibiting chondroitin sulfate glycans and in part as a non-proteoglycan form (By similarity). The relative amount of both forms depends on tissues and tissue maturation (By similarity).</text>
</comment>
<comment type="PTM">
    <text evidence="1">Phosphorylated; in intracellular and extracellular parts.</text>
</comment>
<comment type="miscellaneous">
    <text evidence="1">Different forms of various molecular weight have been observed. Such forms are possibly due to different levels of glycosylation, phosphorylation and/or protein cleavage (By similarity).</text>
</comment>
<keyword id="KW-0025">Alternative splicing</keyword>
<keyword id="KW-1003">Cell membrane</keyword>
<keyword id="KW-0217">Developmental protein</keyword>
<keyword id="KW-0221">Differentiation</keyword>
<keyword id="KW-1015">Disulfide bond</keyword>
<keyword id="KW-0245">EGF-like domain</keyword>
<keyword id="KW-0256">Endoplasmic reticulum</keyword>
<keyword id="KW-0325">Glycoprotein</keyword>
<keyword id="KW-0333">Golgi apparatus</keyword>
<keyword id="KW-0341">Growth regulation</keyword>
<keyword id="KW-0472">Membrane</keyword>
<keyword id="KW-0524">Neurogenesis</keyword>
<keyword id="KW-0597">Phosphoprotein</keyword>
<keyword id="KW-0654">Proteoglycan</keyword>
<keyword id="KW-1267">Proteomics identification</keyword>
<keyword id="KW-1185">Reference proteome</keyword>
<keyword id="KW-0964">Secreted</keyword>
<keyword id="KW-0732">Signal</keyword>
<keyword id="KW-0770">Synapse</keyword>
<keyword id="KW-0812">Transmembrane</keyword>
<keyword id="KW-1133">Transmembrane helix</keyword>